<feature type="signal peptide" evidence="1">
    <location>
        <begin position="1"/>
        <end position="26"/>
    </location>
</feature>
<feature type="chain" id="PRO_0000293093" description="Beta-galactosidase 11">
    <location>
        <begin position="27"/>
        <end position="845"/>
    </location>
</feature>
<feature type="domain" description="SUEL-type lectin" evidence="2">
    <location>
        <begin position="751"/>
        <end position="840"/>
    </location>
</feature>
<feature type="active site" description="Proton donor" evidence="1">
    <location>
        <position position="197"/>
    </location>
</feature>
<feature type="active site" description="Nucleophile" evidence="1">
    <location>
        <position position="268"/>
    </location>
</feature>
<feature type="glycosylation site" description="N-linked (GlcNAc...) asparagine" evidence="1">
    <location>
        <position position="104"/>
    </location>
</feature>
<feature type="glycosylation site" description="N-linked (GlcNAc...) asparagine" evidence="1">
    <location>
        <position position="269"/>
    </location>
</feature>
<feature type="glycosylation site" description="N-linked (GlcNAc...) asparagine" evidence="1">
    <location>
        <position position="300"/>
    </location>
</feature>
<feature type="glycosylation site" description="N-linked (GlcNAc...) asparagine" evidence="1">
    <location>
        <position position="395"/>
    </location>
</feature>
<feature type="glycosylation site" description="N-linked (GlcNAc...) asparagine" evidence="1">
    <location>
        <position position="752"/>
    </location>
</feature>
<feature type="glycosylation site" description="N-linked (GlcNAc...) asparagine" evidence="1">
    <location>
        <position position="784"/>
    </location>
</feature>
<feature type="glycosylation site" description="N-linked (GlcNAc...) asparagine" evidence="1">
    <location>
        <position position="814"/>
    </location>
</feature>
<proteinExistence type="evidence at transcript level"/>
<gene>
    <name type="primary">BGAL11</name>
    <name type="ordered locus">At4g35010</name>
    <name type="ORF">M4E13.70</name>
</gene>
<sequence>MRKHSLDRWLLTAVLVVLLSSSSSFAAKKDAKKKKKSNKEVTYDGTSLIIDGKRELLYSGSIHYPRSTPEMWPSIIKRAKQGGLNTIQTYVFWNVHEPQQGKFNFSGRADLVKFIKLIQKNGMYVTLRLGPFIQAEWTHGGLPYWLREVPGIFFRTDNKQFKEHTERYVRMILDKMKEERLFASQGGPIILGQIENEYSAVQRAYKQDGLNYIKWASNLVDSMKLGIPWVMCKQNDAPDPMINACNGRHCGDTFPGPNRENKPSLWTENWTTQFRVFGDPPTQRSVEDIAYSVARFFSKNGTHVNYYMYHGGTNFGRTSAHYVTTRYYDDAPLDEYGLEKEPKYGHLKHLHNALNLCKKPLLWGQPKTEKPGKDTEIRYYEQPGTKTCAAFLANNNTEAAETIKFKGREYVIAPRSISILPDCKTVVYNTAQIVSQHTSRNFMKSKKANKKFDFKVFTETLPSKLEGNSYIPVELYGLTKDKTDYGWYTTSFKVHKNHLPTKKGVKTFVRIASLGHALHAWLNGEYLGSGHGSHEEKSFVFQKQVTLKAGENHLVMLGVLTGFPDSGSYMEHRYTGPRGISILGLTSGTLDLTESSKWGNKIGMEGEKLGIHTEEGLKKVEWKKFTGKAPGLTWYQTYFDAPESVSAATIRMHGMGKGLIWVNGEGVGRYWQSFLSPLGQPTQIEYHIPRSFLKPKKNLLVIFEEEPNVKPELMDFAIVNRDTVCSYVGENYTPSVRHWTRKKDQVQAITDNVSLTATLKCSGTKKIAAVEFASFGNPIGVCGNFTLGTCNAPVSKQVIEKHCLGKAECVIPVNKSTFQQDKKDSCKNVVKMLAVQVKCGRGKKN</sequence>
<keyword id="KW-0052">Apoplast</keyword>
<keyword id="KW-0325">Glycoprotein</keyword>
<keyword id="KW-0326">Glycosidase</keyword>
<keyword id="KW-0378">Hydrolase</keyword>
<keyword id="KW-1185">Reference proteome</keyword>
<keyword id="KW-0964">Secreted</keyword>
<keyword id="KW-0732">Signal</keyword>
<reference key="1">
    <citation type="submission" date="1999-10" db="EMBL/GenBank/DDBJ databases">
        <title>The beta-galactosidases are encoding by a multigene family in Arabidopsis thaliana.</title>
        <authorList>
            <person name="Gy I."/>
            <person name="Kreis M."/>
            <person name="Lecharny A."/>
        </authorList>
    </citation>
    <scope>NUCLEOTIDE SEQUENCE [MRNA]</scope>
</reference>
<reference key="2">
    <citation type="journal article" date="1999" name="Nature">
        <title>Sequence and analysis of chromosome 4 of the plant Arabidopsis thaliana.</title>
        <authorList>
            <person name="Mayer K.F.X."/>
            <person name="Schueller C."/>
            <person name="Wambutt R."/>
            <person name="Murphy G."/>
            <person name="Volckaert G."/>
            <person name="Pohl T."/>
            <person name="Duesterhoeft A."/>
            <person name="Stiekema W."/>
            <person name="Entian K.-D."/>
            <person name="Terryn N."/>
            <person name="Harris B."/>
            <person name="Ansorge W."/>
            <person name="Brandt P."/>
            <person name="Grivell L.A."/>
            <person name="Rieger M."/>
            <person name="Weichselgartner M."/>
            <person name="de Simone V."/>
            <person name="Obermaier B."/>
            <person name="Mache R."/>
            <person name="Mueller M."/>
            <person name="Kreis M."/>
            <person name="Delseny M."/>
            <person name="Puigdomenech P."/>
            <person name="Watson M."/>
            <person name="Schmidtheini T."/>
            <person name="Reichert B."/>
            <person name="Portetelle D."/>
            <person name="Perez-Alonso M."/>
            <person name="Boutry M."/>
            <person name="Bancroft I."/>
            <person name="Vos P."/>
            <person name="Hoheisel J."/>
            <person name="Zimmermann W."/>
            <person name="Wedler H."/>
            <person name="Ridley P."/>
            <person name="Langham S.-A."/>
            <person name="McCullagh B."/>
            <person name="Bilham L."/>
            <person name="Robben J."/>
            <person name="van der Schueren J."/>
            <person name="Grymonprez B."/>
            <person name="Chuang Y.-J."/>
            <person name="Vandenbussche F."/>
            <person name="Braeken M."/>
            <person name="Weltjens I."/>
            <person name="Voet M."/>
            <person name="Bastiaens I."/>
            <person name="Aert R."/>
            <person name="Defoor E."/>
            <person name="Weitzenegger T."/>
            <person name="Bothe G."/>
            <person name="Ramsperger U."/>
            <person name="Hilbert H."/>
            <person name="Braun M."/>
            <person name="Holzer E."/>
            <person name="Brandt A."/>
            <person name="Peters S."/>
            <person name="van Staveren M."/>
            <person name="Dirkse W."/>
            <person name="Mooijman P."/>
            <person name="Klein Lankhorst R."/>
            <person name="Rose M."/>
            <person name="Hauf J."/>
            <person name="Koetter P."/>
            <person name="Berneiser S."/>
            <person name="Hempel S."/>
            <person name="Feldpausch M."/>
            <person name="Lamberth S."/>
            <person name="Van den Daele H."/>
            <person name="De Keyser A."/>
            <person name="Buysshaert C."/>
            <person name="Gielen J."/>
            <person name="Villarroel R."/>
            <person name="De Clercq R."/>
            <person name="van Montagu M."/>
            <person name="Rogers J."/>
            <person name="Cronin A."/>
            <person name="Quail M.A."/>
            <person name="Bray-Allen S."/>
            <person name="Clark L."/>
            <person name="Doggett J."/>
            <person name="Hall S."/>
            <person name="Kay M."/>
            <person name="Lennard N."/>
            <person name="McLay K."/>
            <person name="Mayes R."/>
            <person name="Pettett A."/>
            <person name="Rajandream M.A."/>
            <person name="Lyne M."/>
            <person name="Benes V."/>
            <person name="Rechmann S."/>
            <person name="Borkova D."/>
            <person name="Bloecker H."/>
            <person name="Scharfe M."/>
            <person name="Grimm M."/>
            <person name="Loehnert T.-H."/>
            <person name="Dose S."/>
            <person name="de Haan M."/>
            <person name="Maarse A.C."/>
            <person name="Schaefer M."/>
            <person name="Mueller-Auer S."/>
            <person name="Gabel C."/>
            <person name="Fuchs M."/>
            <person name="Fartmann B."/>
            <person name="Granderath K."/>
            <person name="Dauner D."/>
            <person name="Herzl A."/>
            <person name="Neumann S."/>
            <person name="Argiriou A."/>
            <person name="Vitale D."/>
            <person name="Liguori R."/>
            <person name="Piravandi E."/>
            <person name="Massenet O."/>
            <person name="Quigley F."/>
            <person name="Clabauld G."/>
            <person name="Muendlein A."/>
            <person name="Felber R."/>
            <person name="Schnabl S."/>
            <person name="Hiller R."/>
            <person name="Schmidt W."/>
            <person name="Lecharny A."/>
            <person name="Aubourg S."/>
            <person name="Chefdor F."/>
            <person name="Cooke R."/>
            <person name="Berger C."/>
            <person name="Monfort A."/>
            <person name="Casacuberta E."/>
            <person name="Gibbons T."/>
            <person name="Weber N."/>
            <person name="Vandenbol M."/>
            <person name="Bargues M."/>
            <person name="Terol J."/>
            <person name="Torres A."/>
            <person name="Perez-Perez A."/>
            <person name="Purnelle B."/>
            <person name="Bent E."/>
            <person name="Johnson S."/>
            <person name="Tacon D."/>
            <person name="Jesse T."/>
            <person name="Heijnen L."/>
            <person name="Schwarz S."/>
            <person name="Scholler P."/>
            <person name="Heber S."/>
            <person name="Francs P."/>
            <person name="Bielke C."/>
            <person name="Frishman D."/>
            <person name="Haase D."/>
            <person name="Lemcke K."/>
            <person name="Mewes H.-W."/>
            <person name="Stocker S."/>
            <person name="Zaccaria P."/>
            <person name="Bevan M."/>
            <person name="Wilson R.K."/>
            <person name="de la Bastide M."/>
            <person name="Habermann K."/>
            <person name="Parnell L."/>
            <person name="Dedhia N."/>
            <person name="Gnoj L."/>
            <person name="Schutz K."/>
            <person name="Huang E."/>
            <person name="Spiegel L."/>
            <person name="Sekhon M."/>
            <person name="Murray J."/>
            <person name="Sheet P."/>
            <person name="Cordes M."/>
            <person name="Abu-Threideh J."/>
            <person name="Stoneking T."/>
            <person name="Kalicki J."/>
            <person name="Graves T."/>
            <person name="Harmon G."/>
            <person name="Edwards J."/>
            <person name="Latreille P."/>
            <person name="Courtney L."/>
            <person name="Cloud J."/>
            <person name="Abbott A."/>
            <person name="Scott K."/>
            <person name="Johnson D."/>
            <person name="Minx P."/>
            <person name="Bentley D."/>
            <person name="Fulton B."/>
            <person name="Miller N."/>
            <person name="Greco T."/>
            <person name="Kemp K."/>
            <person name="Kramer J."/>
            <person name="Fulton L."/>
            <person name="Mardis E."/>
            <person name="Dante M."/>
            <person name="Pepin K."/>
            <person name="Hillier L.W."/>
            <person name="Nelson J."/>
            <person name="Spieth J."/>
            <person name="Ryan E."/>
            <person name="Andrews S."/>
            <person name="Geisel C."/>
            <person name="Layman D."/>
            <person name="Du H."/>
            <person name="Ali J."/>
            <person name="Berghoff A."/>
            <person name="Jones K."/>
            <person name="Drone K."/>
            <person name="Cotton M."/>
            <person name="Joshu C."/>
            <person name="Antonoiu B."/>
            <person name="Zidanic M."/>
            <person name="Strong C."/>
            <person name="Sun H."/>
            <person name="Lamar B."/>
            <person name="Yordan C."/>
            <person name="Ma P."/>
            <person name="Zhong J."/>
            <person name="Preston R."/>
            <person name="Vil D."/>
            <person name="Shekher M."/>
            <person name="Matero A."/>
            <person name="Shah R."/>
            <person name="Swaby I.K."/>
            <person name="O'Shaughnessy A."/>
            <person name="Rodriguez M."/>
            <person name="Hoffman J."/>
            <person name="Till S."/>
            <person name="Granat S."/>
            <person name="Shohdy N."/>
            <person name="Hasegawa A."/>
            <person name="Hameed A."/>
            <person name="Lodhi M."/>
            <person name="Johnson A."/>
            <person name="Chen E."/>
            <person name="Marra M.A."/>
            <person name="Martienssen R."/>
            <person name="McCombie W.R."/>
        </authorList>
    </citation>
    <scope>NUCLEOTIDE SEQUENCE [LARGE SCALE GENOMIC DNA]</scope>
    <source>
        <strain>cv. Columbia</strain>
    </source>
</reference>
<reference key="3">
    <citation type="journal article" date="2017" name="Plant J.">
        <title>Araport11: a complete reannotation of the Arabidopsis thaliana reference genome.</title>
        <authorList>
            <person name="Cheng C.Y."/>
            <person name="Krishnakumar V."/>
            <person name="Chan A.P."/>
            <person name="Thibaud-Nissen F."/>
            <person name="Schobel S."/>
            <person name="Town C.D."/>
        </authorList>
    </citation>
    <scope>GENOME REANNOTATION</scope>
    <source>
        <strain>cv. Columbia</strain>
    </source>
</reference>
<reference key="4">
    <citation type="journal article" date="2007" name="Phytochemistry">
        <title>Functional genomic analysis of Arabidopsis thaliana glycoside hydrolase family 35.</title>
        <authorList>
            <person name="Ahn Y.O."/>
            <person name="Zheng M."/>
            <person name="Bevan D.R."/>
            <person name="Esen A."/>
            <person name="Shiu S.-H."/>
            <person name="Benson J."/>
            <person name="Peng H.-P."/>
            <person name="Miller J.T."/>
            <person name="Cheng C.-L."/>
            <person name="Poulton J.E."/>
            <person name="Shih M.-C."/>
        </authorList>
    </citation>
    <scope>GENE FAMILY</scope>
    <scope>NOMENCLATURE</scope>
</reference>
<dbReference type="EC" id="3.2.1.23"/>
<dbReference type="EMBL" id="AJ270307">
    <property type="protein sequence ID" value="CAB64747.1"/>
    <property type="molecule type" value="mRNA"/>
</dbReference>
<dbReference type="EMBL" id="AL022023">
    <property type="protein sequence ID" value="CAA17766.1"/>
    <property type="status" value="ALT_SEQ"/>
    <property type="molecule type" value="Genomic_DNA"/>
</dbReference>
<dbReference type="EMBL" id="AL161586">
    <property type="protein sequence ID" value="CAB80218.1"/>
    <property type="status" value="ALT_SEQ"/>
    <property type="molecule type" value="Genomic_DNA"/>
</dbReference>
<dbReference type="EMBL" id="CP002687">
    <property type="protein sequence ID" value="AEE86446.1"/>
    <property type="molecule type" value="Genomic_DNA"/>
</dbReference>
<dbReference type="PIR" id="T05771">
    <property type="entry name" value="T05771"/>
</dbReference>
<dbReference type="RefSeq" id="NP_567973.1">
    <property type="nucleotide sequence ID" value="NM_119667.3"/>
</dbReference>
<dbReference type="SMR" id="Q9SCV1"/>
<dbReference type="FunCoup" id="Q9SCV1">
    <property type="interactions" value="45"/>
</dbReference>
<dbReference type="STRING" id="3702.Q9SCV1"/>
<dbReference type="CAZy" id="GH35">
    <property type="family name" value="Glycoside Hydrolase Family 35"/>
</dbReference>
<dbReference type="GlyCosmos" id="Q9SCV1">
    <property type="glycosylation" value="7 sites, No reported glycans"/>
</dbReference>
<dbReference type="GlyGen" id="Q9SCV1">
    <property type="glycosylation" value="7 sites"/>
</dbReference>
<dbReference type="iPTMnet" id="Q9SCV1"/>
<dbReference type="PaxDb" id="3702-AT4G35010.1"/>
<dbReference type="ProteomicsDB" id="240655"/>
<dbReference type="EnsemblPlants" id="AT4G35010.1">
    <property type="protein sequence ID" value="AT4G35010.1"/>
    <property type="gene ID" value="AT4G35010"/>
</dbReference>
<dbReference type="GeneID" id="829653"/>
<dbReference type="Gramene" id="AT4G35010.1">
    <property type="protein sequence ID" value="AT4G35010.1"/>
    <property type="gene ID" value="AT4G35010"/>
</dbReference>
<dbReference type="KEGG" id="ath:AT4G35010"/>
<dbReference type="Araport" id="AT4G35010"/>
<dbReference type="TAIR" id="AT4G35010">
    <property type="gene designation" value="BGAL11"/>
</dbReference>
<dbReference type="eggNOG" id="KOG0496">
    <property type="taxonomic scope" value="Eukaryota"/>
</dbReference>
<dbReference type="HOGENOM" id="CLU_007853_4_0_1"/>
<dbReference type="InParanoid" id="Q9SCV1"/>
<dbReference type="OMA" id="RYWISYL"/>
<dbReference type="OrthoDB" id="1657402at2759"/>
<dbReference type="PhylomeDB" id="Q9SCV1"/>
<dbReference type="BioCyc" id="ARA:AT4G35010-MONOMER"/>
<dbReference type="PRO" id="PR:Q9SCV1"/>
<dbReference type="Proteomes" id="UP000006548">
    <property type="component" value="Chromosome 4"/>
</dbReference>
<dbReference type="ExpressionAtlas" id="Q9SCV1">
    <property type="expression patterns" value="baseline and differential"/>
</dbReference>
<dbReference type="GO" id="GO:0048046">
    <property type="term" value="C:apoplast"/>
    <property type="evidence" value="ECO:0007669"/>
    <property type="project" value="UniProtKB-SubCell"/>
</dbReference>
<dbReference type="GO" id="GO:0004565">
    <property type="term" value="F:beta-galactosidase activity"/>
    <property type="evidence" value="ECO:0000304"/>
    <property type="project" value="TAIR"/>
</dbReference>
<dbReference type="GO" id="GO:0030246">
    <property type="term" value="F:carbohydrate binding"/>
    <property type="evidence" value="ECO:0007669"/>
    <property type="project" value="InterPro"/>
</dbReference>
<dbReference type="GO" id="GO:0005975">
    <property type="term" value="P:carbohydrate metabolic process"/>
    <property type="evidence" value="ECO:0007669"/>
    <property type="project" value="InterPro"/>
</dbReference>
<dbReference type="CDD" id="cd22842">
    <property type="entry name" value="Gal_Rha_Lectin_BGal"/>
    <property type="match status" value="1"/>
</dbReference>
<dbReference type="FunFam" id="2.60.120.260:FF:000050">
    <property type="entry name" value="Beta-galactosidase"/>
    <property type="match status" value="1"/>
</dbReference>
<dbReference type="FunFam" id="2.60.120.260:FF:000156">
    <property type="entry name" value="Beta-galactosidase"/>
    <property type="match status" value="1"/>
</dbReference>
<dbReference type="FunFam" id="3.20.20.80:FF:000006">
    <property type="entry name" value="Beta-galactosidase"/>
    <property type="match status" value="1"/>
</dbReference>
<dbReference type="Gene3D" id="2.60.120.740">
    <property type="match status" value="1"/>
</dbReference>
<dbReference type="Gene3D" id="2.60.120.260">
    <property type="entry name" value="Galactose-binding domain-like"/>
    <property type="match status" value="2"/>
</dbReference>
<dbReference type="Gene3D" id="3.20.20.80">
    <property type="entry name" value="Glycosidases"/>
    <property type="match status" value="1"/>
</dbReference>
<dbReference type="InterPro" id="IPR048913">
    <property type="entry name" value="BetaGal_gal-bd"/>
</dbReference>
<dbReference type="InterPro" id="IPR025300">
    <property type="entry name" value="BetaGal_jelly_roll_dom"/>
</dbReference>
<dbReference type="InterPro" id="IPR008979">
    <property type="entry name" value="Galactose-bd-like_sf"/>
</dbReference>
<dbReference type="InterPro" id="IPR041392">
    <property type="entry name" value="GHD"/>
</dbReference>
<dbReference type="InterPro" id="IPR031330">
    <property type="entry name" value="Gly_Hdrlase_35_cat"/>
</dbReference>
<dbReference type="InterPro" id="IPR019801">
    <property type="entry name" value="Glyco_hydro_35_CS"/>
</dbReference>
<dbReference type="InterPro" id="IPR001944">
    <property type="entry name" value="Glycoside_Hdrlase_35"/>
</dbReference>
<dbReference type="InterPro" id="IPR017853">
    <property type="entry name" value="Glycoside_hydrolase_SF"/>
</dbReference>
<dbReference type="InterPro" id="IPR000922">
    <property type="entry name" value="Lectin_gal-bd_dom"/>
</dbReference>
<dbReference type="InterPro" id="IPR043159">
    <property type="entry name" value="Lectin_gal-bd_sf"/>
</dbReference>
<dbReference type="PANTHER" id="PTHR23421">
    <property type="entry name" value="BETA-GALACTOSIDASE RELATED"/>
    <property type="match status" value="1"/>
</dbReference>
<dbReference type="Pfam" id="PF13364">
    <property type="entry name" value="BetaGal_ABD2"/>
    <property type="match status" value="1"/>
</dbReference>
<dbReference type="Pfam" id="PF21467">
    <property type="entry name" value="BetaGal_gal-bd"/>
    <property type="match status" value="1"/>
</dbReference>
<dbReference type="Pfam" id="PF17834">
    <property type="entry name" value="GHD"/>
    <property type="match status" value="1"/>
</dbReference>
<dbReference type="Pfam" id="PF01301">
    <property type="entry name" value="Glyco_hydro_35"/>
    <property type="match status" value="1"/>
</dbReference>
<dbReference type="Pfam" id="PF02140">
    <property type="entry name" value="SUEL_Lectin"/>
    <property type="match status" value="1"/>
</dbReference>
<dbReference type="PRINTS" id="PR00742">
    <property type="entry name" value="GLHYDRLASE35"/>
</dbReference>
<dbReference type="SUPFAM" id="SSF51445">
    <property type="entry name" value="(Trans)glycosidases"/>
    <property type="match status" value="1"/>
</dbReference>
<dbReference type="SUPFAM" id="SSF49785">
    <property type="entry name" value="Galactose-binding domain-like"/>
    <property type="match status" value="2"/>
</dbReference>
<dbReference type="PROSITE" id="PS01182">
    <property type="entry name" value="GLYCOSYL_HYDROL_F35"/>
    <property type="match status" value="1"/>
</dbReference>
<dbReference type="PROSITE" id="PS50228">
    <property type="entry name" value="SUEL_LECTIN"/>
    <property type="match status" value="1"/>
</dbReference>
<organism>
    <name type="scientific">Arabidopsis thaliana</name>
    <name type="common">Mouse-ear cress</name>
    <dbReference type="NCBI Taxonomy" id="3702"/>
    <lineage>
        <taxon>Eukaryota</taxon>
        <taxon>Viridiplantae</taxon>
        <taxon>Streptophyta</taxon>
        <taxon>Embryophyta</taxon>
        <taxon>Tracheophyta</taxon>
        <taxon>Spermatophyta</taxon>
        <taxon>Magnoliopsida</taxon>
        <taxon>eudicotyledons</taxon>
        <taxon>Gunneridae</taxon>
        <taxon>Pentapetalae</taxon>
        <taxon>rosids</taxon>
        <taxon>malvids</taxon>
        <taxon>Brassicales</taxon>
        <taxon>Brassicaceae</taxon>
        <taxon>Camelineae</taxon>
        <taxon>Arabidopsis</taxon>
    </lineage>
</organism>
<protein>
    <recommendedName>
        <fullName>Beta-galactosidase 11</fullName>
        <shortName>Lactase 11</shortName>
        <ecNumber>3.2.1.23</ecNumber>
    </recommendedName>
</protein>
<accession>Q9SCV1</accession>
<accession>O49609</accession>
<evidence type="ECO:0000255" key="1"/>
<evidence type="ECO:0000255" key="2">
    <source>
        <dbReference type="PROSITE-ProRule" id="PRU00260"/>
    </source>
</evidence>
<evidence type="ECO:0000305" key="3"/>
<name>BGA11_ARATH</name>
<comment type="catalytic activity">
    <reaction>
        <text>Hydrolysis of terminal non-reducing beta-D-galactose residues in beta-D-galactosides.</text>
        <dbReference type="EC" id="3.2.1.23"/>
    </reaction>
</comment>
<comment type="subcellular location">
    <subcellularLocation>
        <location evidence="3">Secreted</location>
        <location evidence="3">Extracellular space</location>
        <location evidence="3">Apoplast</location>
    </subcellularLocation>
</comment>
<comment type="similarity">
    <text evidence="3">Belongs to the glycosyl hydrolase 35 family.</text>
</comment>
<comment type="sequence caution" evidence="3">
    <conflict type="erroneous gene model prediction">
        <sequence resource="EMBL-CDS" id="CAA17766"/>
    </conflict>
</comment>
<comment type="sequence caution" evidence="3">
    <conflict type="erroneous gene model prediction">
        <sequence resource="EMBL-CDS" id="CAB80218"/>
    </conflict>
</comment>